<reference key="1">
    <citation type="submission" date="1994-05" db="EMBL/GenBank/DDBJ databases">
        <authorList>
            <person name="Valentin K.-U."/>
        </authorList>
    </citation>
    <scope>NUCLEOTIDE SEQUENCE [GENOMIC DNA]</scope>
</reference>
<gene>
    <name evidence="2" type="primary">accA</name>
</gene>
<sequence>MITRKTLSLNFLKPVLELEYQIDQLSKMTYKNKSLNIHDLTALKKQLIKIKIEIFQSLTPLQRLHLVRQVDRPTTLDYIGHILDDWIELHGDRGGTDDPALIGGLGKINNRTVVCIGHQRGKDTKDNVLRNFGMASPGGYRKALRLMKHANRFNFPILTFIDTPGAWAGVDAERLGQGEAIAVNLREMFSFNVPIICTIIGEGGSGGALGIGVGDKVLMLEDAVYTVATPEACAAILWKDSKQSLEAAEALKITSYDLKALGIIDDIVEEPLGGSQEDSLLASHILHSKLVTELNYLLSLSSDKLKELRIPKIRRMGTFYEG</sequence>
<protein>
    <recommendedName>
        <fullName evidence="2">Acetyl-coenzyme A carboxylase carboxyl transferase subunit alpha</fullName>
        <shortName evidence="2">ACCase subunit alpha</shortName>
        <shortName evidence="2">Acetyl-CoA carboxylase carboxyltransferase subunit alpha</shortName>
        <ecNumber evidence="2">2.1.3.15</ecNumber>
    </recommendedName>
</protein>
<name>ACCA_ANTSP</name>
<dbReference type="EC" id="2.1.3.15" evidence="2"/>
<dbReference type="EMBL" id="Z33874">
    <property type="protein sequence ID" value="CAA83940.1"/>
    <property type="molecule type" value="Genomic_DNA"/>
</dbReference>
<dbReference type="SMR" id="P46316"/>
<dbReference type="UniPathway" id="UPA00655">
    <property type="reaction ID" value="UER00711"/>
</dbReference>
<dbReference type="GO" id="GO:0009317">
    <property type="term" value="C:acetyl-CoA carboxylase complex"/>
    <property type="evidence" value="ECO:0007669"/>
    <property type="project" value="InterPro"/>
</dbReference>
<dbReference type="GO" id="GO:0009507">
    <property type="term" value="C:chloroplast"/>
    <property type="evidence" value="ECO:0007669"/>
    <property type="project" value="UniProtKB-SubCell"/>
</dbReference>
<dbReference type="GO" id="GO:0003989">
    <property type="term" value="F:acetyl-CoA carboxylase activity"/>
    <property type="evidence" value="ECO:0007669"/>
    <property type="project" value="InterPro"/>
</dbReference>
<dbReference type="GO" id="GO:0005524">
    <property type="term" value="F:ATP binding"/>
    <property type="evidence" value="ECO:0007669"/>
    <property type="project" value="UniProtKB-KW"/>
</dbReference>
<dbReference type="GO" id="GO:0016743">
    <property type="term" value="F:carboxyl- or carbamoyltransferase activity"/>
    <property type="evidence" value="ECO:0007669"/>
    <property type="project" value="UniProtKB-UniRule"/>
</dbReference>
<dbReference type="GO" id="GO:0006633">
    <property type="term" value="P:fatty acid biosynthetic process"/>
    <property type="evidence" value="ECO:0007669"/>
    <property type="project" value="UniProtKB-KW"/>
</dbReference>
<dbReference type="GO" id="GO:2001295">
    <property type="term" value="P:malonyl-CoA biosynthetic process"/>
    <property type="evidence" value="ECO:0007669"/>
    <property type="project" value="UniProtKB-UniRule"/>
</dbReference>
<dbReference type="Gene3D" id="3.90.226.10">
    <property type="entry name" value="2-enoyl-CoA Hydratase, Chain A, domain 1"/>
    <property type="match status" value="1"/>
</dbReference>
<dbReference type="HAMAP" id="MF_00823">
    <property type="entry name" value="AcetylCoA_CT_alpha"/>
    <property type="match status" value="1"/>
</dbReference>
<dbReference type="InterPro" id="IPR001095">
    <property type="entry name" value="Acetyl_CoA_COase_a_su"/>
</dbReference>
<dbReference type="InterPro" id="IPR029045">
    <property type="entry name" value="ClpP/crotonase-like_dom_sf"/>
</dbReference>
<dbReference type="InterPro" id="IPR011763">
    <property type="entry name" value="COA_CT_C"/>
</dbReference>
<dbReference type="NCBIfam" id="TIGR00513">
    <property type="entry name" value="accA"/>
    <property type="match status" value="1"/>
</dbReference>
<dbReference type="NCBIfam" id="NF041504">
    <property type="entry name" value="AccA_sub"/>
    <property type="match status" value="1"/>
</dbReference>
<dbReference type="NCBIfam" id="NF004344">
    <property type="entry name" value="PRK05724.1"/>
    <property type="match status" value="1"/>
</dbReference>
<dbReference type="PANTHER" id="PTHR42853">
    <property type="entry name" value="ACETYL-COENZYME A CARBOXYLASE CARBOXYL TRANSFERASE SUBUNIT ALPHA"/>
    <property type="match status" value="1"/>
</dbReference>
<dbReference type="PANTHER" id="PTHR42853:SF3">
    <property type="entry name" value="ACETYL-COENZYME A CARBOXYLASE CARBOXYL TRANSFERASE SUBUNIT ALPHA, CHLOROPLASTIC"/>
    <property type="match status" value="1"/>
</dbReference>
<dbReference type="Pfam" id="PF03255">
    <property type="entry name" value="ACCA"/>
    <property type="match status" value="1"/>
</dbReference>
<dbReference type="PRINTS" id="PR01069">
    <property type="entry name" value="ACCCTRFRASEA"/>
</dbReference>
<dbReference type="SUPFAM" id="SSF52096">
    <property type="entry name" value="ClpP/crotonase"/>
    <property type="match status" value="1"/>
</dbReference>
<dbReference type="PROSITE" id="PS50989">
    <property type="entry name" value="COA_CT_CTER"/>
    <property type="match status" value="1"/>
</dbReference>
<geneLocation type="chloroplast"/>
<organism>
    <name type="scientific">Antithamnion sp.</name>
    <name type="common">Red alga</name>
    <dbReference type="NCBI Taxonomy" id="2767"/>
    <lineage>
        <taxon>Eukaryota</taxon>
        <taxon>Rhodophyta</taxon>
        <taxon>Florideophyceae</taxon>
        <taxon>Rhodymeniophycidae</taxon>
        <taxon>Ceramiales</taxon>
        <taxon>Ceramiaceae</taxon>
        <taxon>Antithamnion</taxon>
    </lineage>
</organism>
<feature type="chain" id="PRO_0000146784" description="Acetyl-coenzyme A carboxylase carboxyl transferase subunit alpha">
    <location>
        <begin position="1"/>
        <end position="322"/>
    </location>
</feature>
<feature type="domain" description="CoA carboxyltransferase C-terminal" evidence="3">
    <location>
        <begin position="39"/>
        <end position="296"/>
    </location>
</feature>
<comment type="function">
    <text evidence="2">Component of the acetyl coenzyme A carboxylase (ACC) complex. First, biotin carboxylase catalyzes the carboxylation of biotin on its carrier protein (BCCP) and then the CO(2) group is transferred by the carboxyltransferase to acetyl-CoA to form malonyl-CoA.</text>
</comment>
<comment type="catalytic activity">
    <reaction evidence="2">
        <text>N(6)-carboxybiotinyl-L-lysyl-[protein] + acetyl-CoA = N(6)-biotinyl-L-lysyl-[protein] + malonyl-CoA</text>
        <dbReference type="Rhea" id="RHEA:54728"/>
        <dbReference type="Rhea" id="RHEA-COMP:10505"/>
        <dbReference type="Rhea" id="RHEA-COMP:10506"/>
        <dbReference type="ChEBI" id="CHEBI:57288"/>
        <dbReference type="ChEBI" id="CHEBI:57384"/>
        <dbReference type="ChEBI" id="CHEBI:83144"/>
        <dbReference type="ChEBI" id="CHEBI:83145"/>
        <dbReference type="EC" id="2.1.3.15"/>
    </reaction>
</comment>
<comment type="pathway">
    <text evidence="2">Lipid metabolism; malonyl-CoA biosynthesis; malonyl-CoA from acetyl-CoA: step 1/1.</text>
</comment>
<comment type="subunit">
    <text evidence="1">Acetyl-CoA carboxylase is a heterohexamer composed of biotin carboxyl carrier protein (accB), biotin carboxylase (accC) and two subunits each of ACCase subunit alpha (accA) and ACCase subunit beta (accD).</text>
</comment>
<comment type="subcellular location">
    <subcellularLocation>
        <location>Plastid</location>
        <location>Chloroplast</location>
    </subcellularLocation>
</comment>
<comment type="similarity">
    <text evidence="2">Belongs to the AccA family.</text>
</comment>
<evidence type="ECO:0000250" key="1"/>
<evidence type="ECO:0000255" key="2">
    <source>
        <dbReference type="HAMAP-Rule" id="MF_00823"/>
    </source>
</evidence>
<evidence type="ECO:0000255" key="3">
    <source>
        <dbReference type="PROSITE-ProRule" id="PRU01137"/>
    </source>
</evidence>
<accession>P46316</accession>
<proteinExistence type="inferred from homology"/>
<keyword id="KW-0067">ATP-binding</keyword>
<keyword id="KW-0150">Chloroplast</keyword>
<keyword id="KW-0275">Fatty acid biosynthesis</keyword>
<keyword id="KW-0276">Fatty acid metabolism</keyword>
<keyword id="KW-0444">Lipid biosynthesis</keyword>
<keyword id="KW-0443">Lipid metabolism</keyword>
<keyword id="KW-0547">Nucleotide-binding</keyword>
<keyword id="KW-0934">Plastid</keyword>
<keyword id="KW-0808">Transferase</keyword>